<protein>
    <recommendedName>
        <fullName evidence="6">Alpha,alpha-trehalose-phosphate synthase [UDP-forming] 2</fullName>
        <ecNumber evidence="7">2.4.1.15</ecNumber>
    </recommendedName>
    <alternativeName>
        <fullName evidence="2">UDP-glucose-glucosephosphate glucosyltransferase</fullName>
    </alternativeName>
</protein>
<accession>Q4WHW0</accession>
<sequence length="479" mass="53801">MSSTNGSEGDHRLLIVSNRLPITIRRSEGGKYEFSMSSGGLVTGLSGLSKTTTFQWYGWPGLEVPEDELGSVKKRLKDEFNATPVFMDDKLADRHYNGFSNSILWPLLHYHPGEIVFDEGAWDAYREANLLFAKTIVKEAQDGDLIWVQDYHLMLLPELLRAELRAAGKKANKIGFFLHTPFPSSEIYRILPVRGQLLRGVLHCDLIGFHTYDYARHFLSSCSHLLGLVTTPSSVKYEGRSVAVGAFPIGIDPDKFTDGLKSPKVQNRIASLENKFQGTKLMVSVDRLDYIKGIPQKLHALEVFLQNHPEWVGKVVLVQVAVPSRQDVEEYQNLRAVVNELVGRINGKFGTVDYMPIHFMHKSVSFDELIALYAASDACVVSSTRDGMNLVSFEYIATQQKRKGVLILSEFAGAAQSLNGSLVVNPWNTEELARAYHEAVSMSDEQRARKFEKLYKYISKYTSAFWGKSFVAELLQCSS</sequence>
<organism evidence="9">
    <name type="scientific">Aspergillus fumigatus (strain ATCC MYA-4609 / CBS 101355 / FGSC A1100 / Af293)</name>
    <name type="common">Neosartorya fumigata</name>
    <dbReference type="NCBI Taxonomy" id="330879"/>
    <lineage>
        <taxon>Eukaryota</taxon>
        <taxon>Fungi</taxon>
        <taxon>Dikarya</taxon>
        <taxon>Ascomycota</taxon>
        <taxon>Pezizomycotina</taxon>
        <taxon>Eurotiomycetes</taxon>
        <taxon>Eurotiomycetidae</taxon>
        <taxon>Eurotiales</taxon>
        <taxon>Aspergillaceae</taxon>
        <taxon>Aspergillus</taxon>
        <taxon>Aspergillus subgen. Fumigati</taxon>
    </lineage>
</organism>
<evidence type="ECO:0000250" key="1">
    <source>
        <dbReference type="UniProtKB" id="Q92410"/>
    </source>
</evidence>
<evidence type="ECO:0000255" key="2">
    <source>
        <dbReference type="RuleBase" id="RU362045"/>
    </source>
</evidence>
<evidence type="ECO:0000269" key="3">
    <source>
    </source>
</evidence>
<evidence type="ECO:0000269" key="4">
    <source>
    </source>
</evidence>
<evidence type="ECO:0000303" key="5">
    <source>
    </source>
</evidence>
<evidence type="ECO:0000305" key="6"/>
<evidence type="ECO:0000305" key="7">
    <source>
    </source>
</evidence>
<evidence type="ECO:0000312" key="8">
    <source>
        <dbReference type="EMBL" id="EAL87495.1"/>
    </source>
</evidence>
<evidence type="ECO:0000312" key="9">
    <source>
        <dbReference type="Proteomes" id="UP000002530"/>
    </source>
</evidence>
<evidence type="ECO:0007744" key="10">
    <source>
        <dbReference type="PDB" id="5HVO"/>
    </source>
</evidence>
<evidence type="ECO:0007829" key="11">
    <source>
        <dbReference type="PDB" id="5HVO"/>
    </source>
</evidence>
<keyword id="KW-0002">3D-structure</keyword>
<keyword id="KW-0328">Glycosyltransferase</keyword>
<keyword id="KW-0547">Nucleotide-binding</keyword>
<keyword id="KW-1185">Reference proteome</keyword>
<keyword id="KW-0808">Transferase</keyword>
<reference evidence="9" key="1">
    <citation type="journal article" date="2005" name="Nature">
        <title>Genomic sequence of the pathogenic and allergenic filamentous fungus Aspergillus fumigatus.</title>
        <authorList>
            <person name="Nierman W.C."/>
            <person name="Pain A."/>
            <person name="Anderson M.J."/>
            <person name="Wortman J.R."/>
            <person name="Kim H.S."/>
            <person name="Arroyo J."/>
            <person name="Berriman M."/>
            <person name="Abe K."/>
            <person name="Archer D.B."/>
            <person name="Bermejo C."/>
            <person name="Bennett J.W."/>
            <person name="Bowyer P."/>
            <person name="Chen D."/>
            <person name="Collins M."/>
            <person name="Coulsen R."/>
            <person name="Davies R."/>
            <person name="Dyer P.S."/>
            <person name="Farman M.L."/>
            <person name="Fedorova N."/>
            <person name="Fedorova N.D."/>
            <person name="Feldblyum T.V."/>
            <person name="Fischer R."/>
            <person name="Fosker N."/>
            <person name="Fraser A."/>
            <person name="Garcia J.L."/>
            <person name="Garcia M.J."/>
            <person name="Goble A."/>
            <person name="Goldman G.H."/>
            <person name="Gomi K."/>
            <person name="Griffith-Jones S."/>
            <person name="Gwilliam R."/>
            <person name="Haas B.J."/>
            <person name="Haas H."/>
            <person name="Harris D.E."/>
            <person name="Horiuchi H."/>
            <person name="Huang J."/>
            <person name="Humphray S."/>
            <person name="Jimenez J."/>
            <person name="Keller N."/>
            <person name="Khouri H."/>
            <person name="Kitamoto K."/>
            <person name="Kobayashi T."/>
            <person name="Konzack S."/>
            <person name="Kulkarni R."/>
            <person name="Kumagai T."/>
            <person name="Lafton A."/>
            <person name="Latge J.-P."/>
            <person name="Li W."/>
            <person name="Lord A."/>
            <person name="Lu C."/>
            <person name="Majoros W.H."/>
            <person name="May G.S."/>
            <person name="Miller B.L."/>
            <person name="Mohamoud Y."/>
            <person name="Molina M."/>
            <person name="Monod M."/>
            <person name="Mouyna I."/>
            <person name="Mulligan S."/>
            <person name="Murphy L.D."/>
            <person name="O'Neil S."/>
            <person name="Paulsen I."/>
            <person name="Penalva M.A."/>
            <person name="Pertea M."/>
            <person name="Price C."/>
            <person name="Pritchard B.L."/>
            <person name="Quail M.A."/>
            <person name="Rabbinowitsch E."/>
            <person name="Rawlins N."/>
            <person name="Rajandream M.A."/>
            <person name="Reichard U."/>
            <person name="Renauld H."/>
            <person name="Robson G.D."/>
            <person name="Rodriguez de Cordoba S."/>
            <person name="Rodriguez-Pena J.M."/>
            <person name="Ronning C.M."/>
            <person name="Rutter S."/>
            <person name="Salzberg S.L."/>
            <person name="Sanchez M."/>
            <person name="Sanchez-Ferrero J.C."/>
            <person name="Saunders D."/>
            <person name="Seeger K."/>
            <person name="Squares R."/>
            <person name="Squares S."/>
            <person name="Takeuchi M."/>
            <person name="Tekaia F."/>
            <person name="Turner G."/>
            <person name="Vazquez de Aldana C.R."/>
            <person name="Weidman J."/>
            <person name="White O."/>
            <person name="Woodward J.R."/>
            <person name="Yu J.-H."/>
            <person name="Fraser C.M."/>
            <person name="Galagan J.E."/>
            <person name="Asai K."/>
            <person name="Machida M."/>
            <person name="Hall N."/>
            <person name="Barrell B.G."/>
            <person name="Denning D.W."/>
        </authorList>
    </citation>
    <scope>NUCLEOTIDE SEQUENCE [LARGE SCALE GENOMIC DNA]</scope>
    <source>
        <strain>ATCC MYA-4609 / CBS 101355 / FGSC A1100 / Af293</strain>
    </source>
</reference>
<reference evidence="6" key="2">
    <citation type="journal article" date="2010" name="Infect. Immun.">
        <title>Role of trehalose biosynthesis in Aspergillus fumigatus development, stress response, and virulence.</title>
        <authorList>
            <person name="Al-Bader N."/>
            <person name="Vanier G."/>
            <person name="Liu H."/>
            <person name="Gravelat F.N."/>
            <person name="Urb M."/>
            <person name="Hoareau C.M."/>
            <person name="Campoli P."/>
            <person name="Chabot J."/>
            <person name="Filler S.G."/>
            <person name="Sheppard D.C."/>
        </authorList>
    </citation>
    <scope>FUNCTION</scope>
    <scope>CATALYTIC ACTIVITY</scope>
    <scope>DEVELOPMENTAL STAGE</scope>
    <scope>INDUCTION</scope>
    <scope>DISRUPTION PHENOTYPE</scope>
</reference>
<reference evidence="10" key="3">
    <citation type="journal article" date="2017" name="MBio">
        <title>Structural and In Vivo Studies on Trehalose-6-Phosphate Synthase from Pathogenic Fungi Provide Insights into Its Catalytic Mechanism, Biological Necessity, and Potential for Novel Antifungal Drug Design.</title>
        <authorList>
            <person name="Miao Y."/>
            <person name="Tenor J.L."/>
            <person name="Toffaletti D.L."/>
            <person name="Maskarinec S.A."/>
            <person name="Liu J."/>
            <person name="Lee R.E."/>
            <person name="Perfect J.R."/>
            <person name="Brennan R.G."/>
        </authorList>
    </citation>
    <scope>X-RAY CRYSTALLOGRAPHY (2.47 ANGSTROMS) IN COMPLEX WITH UDP AND INHIBITOR</scope>
</reference>
<comment type="function">
    <text evidence="3">Synthase catalytic subunit of the trehalose synthase complex that catalyzes the production of trehalose from glucose-6-phosphate and UDP-alpha-D-glucose in a two step process (PubMed:20439478). The disaccharide trehalose serves as a storage carbohydrate that is mobilized during conidial germination (PubMed:20439478). Regulates the level of trehalose as a protectant for cell integrity during thermal and oxidative stress (PubMed:20439478).</text>
</comment>
<comment type="catalytic activity">
    <reaction evidence="7">
        <text>D-glucose 6-phosphate + UDP-alpha-D-glucose = alpha,alpha-trehalose 6-phosphate + UDP + H(+)</text>
        <dbReference type="Rhea" id="RHEA:18889"/>
        <dbReference type="ChEBI" id="CHEBI:15378"/>
        <dbReference type="ChEBI" id="CHEBI:58223"/>
        <dbReference type="ChEBI" id="CHEBI:58429"/>
        <dbReference type="ChEBI" id="CHEBI:58885"/>
        <dbReference type="ChEBI" id="CHEBI:61548"/>
        <dbReference type="EC" id="2.4.1.15"/>
    </reaction>
</comment>
<comment type="pathway">
    <text evidence="6">Carbohydrate biosynthesis.</text>
</comment>
<comment type="developmental stage">
    <text evidence="3">Increases during conidiation.</text>
</comment>
<comment type="induction">
    <text evidence="3">Induced by thermal stress (PubMed:20439478). Repressed by oxidative stress (PubMed:20439478).</text>
</comment>
<comment type="disruption phenotype">
    <text evidence="3">Simultaneous disruption of tpsA abolishes trehalose biosynthesis during hyphal and conidia formation, and delays germination (PubMed:20439478). Simultaneous disruption of tpsA results in abnormal cell wall formation, sensitivity to caspofungin, calcofluor white, thermal stress and oxidative stress, and hypervirulence in a mouse model of aspergillosis (PubMed:20439478).</text>
</comment>
<comment type="similarity">
    <text evidence="6">Belongs to the glycosyltransferase 20 family.</text>
</comment>
<feature type="chain" id="PRO_0000453074" description="Alpha,alpha-trehalose-phosphate synthase [UDP-forming] 2">
    <location>
        <begin position="1"/>
        <end position="479"/>
    </location>
</feature>
<feature type="binding site" evidence="1">
    <location>
        <position position="96"/>
    </location>
    <ligand>
        <name>D-glucose 6-phosphate</name>
        <dbReference type="ChEBI" id="CHEBI:61548"/>
    </ligand>
</feature>
<feature type="binding site" evidence="1">
    <location>
        <position position="150"/>
    </location>
    <ligand>
        <name>D-glucose 6-phosphate</name>
        <dbReference type="ChEBI" id="CHEBI:61548"/>
    </ligand>
</feature>
<feature type="binding site" evidence="4 10">
    <location>
        <position position="287"/>
    </location>
    <ligand>
        <name>UDP</name>
        <dbReference type="ChEBI" id="CHEBI:58223"/>
    </ligand>
</feature>
<feature type="binding site" evidence="1">
    <location>
        <position position="287"/>
    </location>
    <ligand>
        <name>UDP-alpha-D-glucose</name>
        <dbReference type="ChEBI" id="CHEBI:58885"/>
    </ligand>
</feature>
<feature type="binding site" evidence="4 10">
    <location>
        <position position="292"/>
    </location>
    <ligand>
        <name>UDP</name>
        <dbReference type="ChEBI" id="CHEBI:58223"/>
    </ligand>
</feature>
<feature type="binding site" evidence="1">
    <location>
        <position position="292"/>
    </location>
    <ligand>
        <name>UDP-alpha-D-glucose</name>
        <dbReference type="ChEBI" id="CHEBI:58885"/>
    </ligand>
</feature>
<feature type="binding site" evidence="1">
    <location>
        <position position="325"/>
    </location>
    <ligand>
        <name>D-glucose 6-phosphate</name>
        <dbReference type="ChEBI" id="CHEBI:61548"/>
    </ligand>
</feature>
<feature type="binding site" evidence="4 10">
    <location>
        <begin position="363"/>
        <end position="364"/>
    </location>
    <ligand>
        <name>UDP</name>
        <dbReference type="ChEBI" id="CHEBI:58223"/>
    </ligand>
</feature>
<feature type="binding site" evidence="1">
    <location>
        <begin position="386"/>
        <end position="394"/>
    </location>
    <ligand>
        <name>UDP-alpha-D-glucose</name>
        <dbReference type="ChEBI" id="CHEBI:58885"/>
    </ligand>
</feature>
<feature type="binding site" evidence="4 10">
    <location>
        <begin position="390"/>
        <end position="394"/>
    </location>
    <ligand>
        <name>UDP</name>
        <dbReference type="ChEBI" id="CHEBI:58223"/>
    </ligand>
</feature>
<feature type="strand" evidence="11">
    <location>
        <begin position="13"/>
        <end position="19"/>
    </location>
</feature>
<feature type="strand" evidence="11">
    <location>
        <begin position="21"/>
        <end position="25"/>
    </location>
</feature>
<feature type="strand" evidence="11">
    <location>
        <begin position="33"/>
        <end position="36"/>
    </location>
</feature>
<feature type="strand" evidence="11">
    <location>
        <begin position="54"/>
        <end position="59"/>
    </location>
</feature>
<feature type="helix" evidence="11">
    <location>
        <begin position="66"/>
        <end position="68"/>
    </location>
</feature>
<feature type="helix" evidence="11">
    <location>
        <begin position="69"/>
        <end position="80"/>
    </location>
</feature>
<feature type="strand" evidence="11">
    <location>
        <begin position="82"/>
        <end position="84"/>
    </location>
</feature>
<feature type="helix" evidence="11">
    <location>
        <begin position="89"/>
        <end position="96"/>
    </location>
</feature>
<feature type="helix" evidence="11">
    <location>
        <begin position="97"/>
        <end position="103"/>
    </location>
</feature>
<feature type="helix" evidence="11">
    <location>
        <begin position="104"/>
        <end position="108"/>
    </location>
</feature>
<feature type="helix" evidence="11">
    <location>
        <begin position="119"/>
        <end position="139"/>
    </location>
</feature>
<feature type="strand" evidence="11">
    <location>
        <begin position="145"/>
        <end position="150"/>
    </location>
</feature>
<feature type="helix" evidence="11">
    <location>
        <begin position="151"/>
        <end position="153"/>
    </location>
</feature>
<feature type="helix" evidence="11">
    <location>
        <begin position="156"/>
        <end position="164"/>
    </location>
</feature>
<feature type="turn" evidence="11">
    <location>
        <begin position="165"/>
        <end position="168"/>
    </location>
</feature>
<feature type="strand" evidence="11">
    <location>
        <begin position="173"/>
        <end position="177"/>
    </location>
</feature>
<feature type="helix" evidence="11">
    <location>
        <begin position="185"/>
        <end position="188"/>
    </location>
</feature>
<feature type="helix" evidence="11">
    <location>
        <begin position="194"/>
        <end position="201"/>
    </location>
</feature>
<feature type="strand" evidence="11">
    <location>
        <begin position="205"/>
        <end position="211"/>
    </location>
</feature>
<feature type="helix" evidence="11">
    <location>
        <begin position="212"/>
        <end position="225"/>
    </location>
</feature>
<feature type="strand" evidence="11">
    <location>
        <begin position="234"/>
        <end position="237"/>
    </location>
</feature>
<feature type="strand" evidence="11">
    <location>
        <begin position="240"/>
        <end position="246"/>
    </location>
</feature>
<feature type="helix" evidence="11">
    <location>
        <begin position="253"/>
        <end position="260"/>
    </location>
</feature>
<feature type="helix" evidence="11">
    <location>
        <begin position="263"/>
        <end position="275"/>
    </location>
</feature>
<feature type="turn" evidence="11">
    <location>
        <begin position="276"/>
        <end position="278"/>
    </location>
</feature>
<feature type="strand" evidence="11">
    <location>
        <begin position="279"/>
        <end position="288"/>
    </location>
</feature>
<feature type="helix" evidence="11">
    <location>
        <begin position="290"/>
        <end position="292"/>
    </location>
</feature>
<feature type="helix" evidence="11">
    <location>
        <begin position="294"/>
        <end position="307"/>
    </location>
</feature>
<feature type="helix" evidence="11">
    <location>
        <begin position="309"/>
        <end position="311"/>
    </location>
</feature>
<feature type="turn" evidence="11">
    <location>
        <begin position="312"/>
        <end position="314"/>
    </location>
</feature>
<feature type="strand" evidence="11">
    <location>
        <begin position="315"/>
        <end position="322"/>
    </location>
</feature>
<feature type="helix" evidence="11">
    <location>
        <begin position="329"/>
        <end position="349"/>
    </location>
</feature>
<feature type="strand" evidence="11">
    <location>
        <begin position="356"/>
        <end position="360"/>
    </location>
</feature>
<feature type="helix" evidence="11">
    <location>
        <begin position="366"/>
        <end position="375"/>
    </location>
</feature>
<feature type="strand" evidence="11">
    <location>
        <begin position="377"/>
        <end position="381"/>
    </location>
</feature>
<feature type="strand" evidence="11">
    <location>
        <begin position="384"/>
        <end position="387"/>
    </location>
</feature>
<feature type="helix" evidence="11">
    <location>
        <begin position="391"/>
        <end position="397"/>
    </location>
</feature>
<feature type="turn" evidence="11">
    <location>
        <begin position="400"/>
        <end position="402"/>
    </location>
</feature>
<feature type="strand" evidence="11">
    <location>
        <begin position="405"/>
        <end position="409"/>
    </location>
</feature>
<feature type="helix" evidence="11">
    <location>
        <begin position="414"/>
        <end position="417"/>
    </location>
</feature>
<feature type="strand" evidence="11">
    <location>
        <begin position="421"/>
        <end position="424"/>
    </location>
</feature>
<feature type="helix" evidence="11">
    <location>
        <begin position="429"/>
        <end position="440"/>
    </location>
</feature>
<feature type="helix" evidence="11">
    <location>
        <begin position="444"/>
        <end position="460"/>
    </location>
</feature>
<feature type="helix" evidence="11">
    <location>
        <begin position="463"/>
        <end position="475"/>
    </location>
</feature>
<gene>
    <name evidence="5" type="primary">tpsB</name>
    <name evidence="8" type="ORF">AFUA_2G04010</name>
</gene>
<name>TPS1B_ASPFU</name>
<proteinExistence type="evidence at protein level"/>
<dbReference type="EC" id="2.4.1.15" evidence="7"/>
<dbReference type="EMBL" id="AAHF01000008">
    <property type="protein sequence ID" value="EAL87495.1"/>
    <property type="molecule type" value="Genomic_DNA"/>
</dbReference>
<dbReference type="RefSeq" id="XP_749533.1">
    <property type="nucleotide sequence ID" value="XM_744440.1"/>
</dbReference>
<dbReference type="PDB" id="5HVO">
    <property type="method" value="X-ray"/>
    <property type="resolution" value="2.47 A"/>
    <property type="chains" value="A/B/C/D=1-479"/>
</dbReference>
<dbReference type="PDBsum" id="5HVO"/>
<dbReference type="SMR" id="Q4WHW0"/>
<dbReference type="FunCoup" id="Q4WHW0">
    <property type="interactions" value="580"/>
</dbReference>
<dbReference type="STRING" id="330879.Q4WHW0"/>
<dbReference type="EnsemblFungi" id="EAL87495">
    <property type="protein sequence ID" value="EAL87495"/>
    <property type="gene ID" value="AFUA_2G04010"/>
</dbReference>
<dbReference type="GeneID" id="3506931"/>
<dbReference type="KEGG" id="afm:AFUA_2G04010"/>
<dbReference type="VEuPathDB" id="FungiDB:Afu2g04010"/>
<dbReference type="eggNOG" id="KOG1050">
    <property type="taxonomic scope" value="Eukaryota"/>
</dbReference>
<dbReference type="HOGENOM" id="CLU_002351_7_2_1"/>
<dbReference type="InParanoid" id="Q4WHW0"/>
<dbReference type="OMA" id="AFWIQDY"/>
<dbReference type="OrthoDB" id="755951at2759"/>
<dbReference type="Proteomes" id="UP000002530">
    <property type="component" value="Chromosome 2"/>
</dbReference>
<dbReference type="GO" id="GO:0005946">
    <property type="term" value="C:alpha,alpha-trehalose-phosphate synthase complex (UDP-forming)"/>
    <property type="evidence" value="ECO:0000318"/>
    <property type="project" value="GO_Central"/>
</dbReference>
<dbReference type="GO" id="GO:0003825">
    <property type="term" value="F:alpha,alpha-trehalose-phosphate synthase (UDP-forming) activity"/>
    <property type="evidence" value="ECO:0000318"/>
    <property type="project" value="GO_Central"/>
</dbReference>
<dbReference type="GO" id="GO:0000166">
    <property type="term" value="F:nucleotide binding"/>
    <property type="evidence" value="ECO:0007669"/>
    <property type="project" value="UniProtKB-KW"/>
</dbReference>
<dbReference type="GO" id="GO:0102986">
    <property type="term" value="F:trehalose synthase activity"/>
    <property type="evidence" value="ECO:0000315"/>
    <property type="project" value="UniProtKB"/>
</dbReference>
<dbReference type="GO" id="GO:0005975">
    <property type="term" value="P:carbohydrate metabolic process"/>
    <property type="evidence" value="ECO:0000315"/>
    <property type="project" value="AspGD"/>
</dbReference>
<dbReference type="GO" id="GO:0034605">
    <property type="term" value="P:cellular response to heat"/>
    <property type="evidence" value="ECO:0000318"/>
    <property type="project" value="GO_Central"/>
</dbReference>
<dbReference type="GO" id="GO:0005992">
    <property type="term" value="P:trehalose biosynthetic process"/>
    <property type="evidence" value="ECO:0000315"/>
    <property type="project" value="AspGD"/>
</dbReference>
<dbReference type="CDD" id="cd03788">
    <property type="entry name" value="GT20_TPS"/>
    <property type="match status" value="1"/>
</dbReference>
<dbReference type="FunFam" id="3.40.50.2000:FF:000007">
    <property type="entry name" value="Trehalose-6-phosphate synthase"/>
    <property type="match status" value="1"/>
</dbReference>
<dbReference type="FunFam" id="3.40.50.2000:FF:000035">
    <property type="entry name" value="Trehalose-6-phosphate synthase"/>
    <property type="match status" value="1"/>
</dbReference>
<dbReference type="Gene3D" id="3.40.50.2000">
    <property type="entry name" value="Glycogen Phosphorylase B"/>
    <property type="match status" value="2"/>
</dbReference>
<dbReference type="InterPro" id="IPR001830">
    <property type="entry name" value="Glyco_trans_20"/>
</dbReference>
<dbReference type="InterPro" id="IPR012766">
    <property type="entry name" value="Trehalose_OtsA"/>
</dbReference>
<dbReference type="NCBIfam" id="TIGR02400">
    <property type="entry name" value="trehalose_OtsA"/>
    <property type="match status" value="1"/>
</dbReference>
<dbReference type="PANTHER" id="PTHR10788:SF106">
    <property type="entry name" value="BCDNA.GH08860"/>
    <property type="match status" value="1"/>
</dbReference>
<dbReference type="PANTHER" id="PTHR10788">
    <property type="entry name" value="TREHALOSE-6-PHOSPHATE SYNTHASE"/>
    <property type="match status" value="1"/>
</dbReference>
<dbReference type="Pfam" id="PF00982">
    <property type="entry name" value="Glyco_transf_20"/>
    <property type="match status" value="1"/>
</dbReference>
<dbReference type="SUPFAM" id="SSF53756">
    <property type="entry name" value="UDP-Glycosyltransferase/glycogen phosphorylase"/>
    <property type="match status" value="1"/>
</dbReference>